<sequence>MPCVQLPAKESALFKRVLKCYEQKQYKNGLKFCKMILSNPKFAEHGETLAMKGLILNCLGKREEAYEFVRKGLRSDVRSHVCWHVYGLLQRSDKKYDEAIKCYRNALKLDKDNLQILRDLSLLQIQMRDLEGYRETRYQLLQLRPTQRASWIGYAIAYHLLKDYDTALKLLEEFRQTQQVPPNKIAYEYSELLLYQNQVMREANLFQESLEHIETYEKLICDKLLVEEIKGEMLLKLGRLKEASEVFRNLIDWNAENWCYYEGLEKALQLRSLDERLQLYEEVSKQHPRAVSPRRLPLSFAPGKKFRELMDKFLRPNFSKGCPPLFTTLKSLYCDTEKVSIIQELVTNYEASLKMNGYFSPYENGEKEPPTTLIWVQYFLAQHYDKLGQYFLALEYINAVIASTPTLIELFYMKAKIYKHMGNLKEAAQWMDEAQSLDTADRFINSKCAKYMLRANMIKEAEEMCSRFTREGTSAMENLNEMQCMWFETECISAYQRLGRYGDALKKCHEVERHFLEITDDQFDFHTYCMRKMTLRAYVGLLRLEDALRRHTFYFKAARSAIEIYLKLHDNPLTNDSKQQDIDSENLSAKEMKKMLSKQRRAQKKAKVEEERKHTERERQQKNQKKKREEEEEVTSGHKEELIPEKLERVDNPLEEAIKFLTPLKTLAAESIDTHLLAFEIYFRKGKFLLMLQSVKRAFAIESNNPWLHECLIKFSKSVSNHSNLPDIVSKVLAQEMKKIFVNKDLHSFNEDFLRHNATSLQHLLAGAKMMYFLDKSRQEKAIATATRLDETIKNKNVKTLIKVSEALLDGSFGNCSSQYEEYRKTCHSLLPLTPAFLPAAREALGLSAELNHTADHKLLMNEI</sequence>
<feature type="chain" id="PRO_0000106298" description="N-alpha-acetyltransferase 16, NatA auxiliary subunit">
    <location>
        <begin position="1"/>
        <end position="864"/>
    </location>
</feature>
<feature type="repeat" description="TPR 1">
    <location>
        <begin position="46"/>
        <end position="79"/>
    </location>
</feature>
<feature type="repeat" description="TPR 2">
    <location>
        <begin position="80"/>
        <end position="113"/>
    </location>
</feature>
<feature type="repeat" description="TPR 3">
    <location>
        <begin position="148"/>
        <end position="184"/>
    </location>
</feature>
<feature type="repeat" description="TPR 4">
    <location>
        <begin position="224"/>
        <end position="257"/>
    </location>
</feature>
<feature type="repeat" description="TPR 5">
    <location>
        <begin position="374"/>
        <end position="407"/>
    </location>
</feature>
<feature type="repeat" description="TPR 6">
    <location>
        <begin position="408"/>
        <end position="441"/>
    </location>
</feature>
<feature type="repeat" description="TPR 7">
    <location>
        <begin position="485"/>
        <end position="514"/>
    </location>
</feature>
<feature type="region of interest" description="Disordered" evidence="2">
    <location>
        <begin position="594"/>
        <end position="646"/>
    </location>
</feature>
<feature type="compositionally biased region" description="Basic residues" evidence="2">
    <location>
        <begin position="595"/>
        <end position="605"/>
    </location>
</feature>
<feature type="compositionally biased region" description="Basic and acidic residues" evidence="2">
    <location>
        <begin position="606"/>
        <end position="621"/>
    </location>
</feature>
<feature type="compositionally biased region" description="Basic and acidic residues" evidence="2">
    <location>
        <begin position="635"/>
        <end position="646"/>
    </location>
</feature>
<dbReference type="EMBL" id="AK005056">
    <property type="protein sequence ID" value="BAB23782.1"/>
    <property type="molecule type" value="mRNA"/>
</dbReference>
<dbReference type="EMBL" id="AK152498">
    <property type="protein sequence ID" value="BAE31267.1"/>
    <property type="molecule type" value="mRNA"/>
</dbReference>
<dbReference type="EMBL" id="BC052445">
    <property type="protein sequence ID" value="AAH52445.1"/>
    <property type="molecule type" value="mRNA"/>
</dbReference>
<dbReference type="CCDS" id="CCDS27296.1"/>
<dbReference type="RefSeq" id="NP_080108.1">
    <property type="nucleotide sequence ID" value="NM_025832.2"/>
</dbReference>
<dbReference type="SMR" id="Q9DBB4"/>
<dbReference type="FunCoup" id="Q9DBB4">
    <property type="interactions" value="2901"/>
</dbReference>
<dbReference type="STRING" id="10090.ENSMUSP00000022597"/>
<dbReference type="iPTMnet" id="Q9DBB4"/>
<dbReference type="PhosphoSitePlus" id="Q9DBB4"/>
<dbReference type="PaxDb" id="10090-ENSMUSP00000022597"/>
<dbReference type="PeptideAtlas" id="Q9DBB4"/>
<dbReference type="ProteomicsDB" id="287662"/>
<dbReference type="Pumba" id="Q9DBB4"/>
<dbReference type="Antibodypedia" id="23410">
    <property type="antibodies" value="60 antibodies from 19 providers"/>
</dbReference>
<dbReference type="DNASU" id="66897"/>
<dbReference type="Ensembl" id="ENSMUST00000022597.15">
    <property type="protein sequence ID" value="ENSMUSP00000022597.8"/>
    <property type="gene ID" value="ENSMUSG00000022020.16"/>
</dbReference>
<dbReference type="GeneID" id="66897"/>
<dbReference type="KEGG" id="mmu:66897"/>
<dbReference type="UCSC" id="uc007usv.1">
    <property type="organism name" value="mouse"/>
</dbReference>
<dbReference type="AGR" id="MGI:1914147"/>
<dbReference type="CTD" id="79612"/>
<dbReference type="MGI" id="MGI:1914147">
    <property type="gene designation" value="Naa16"/>
</dbReference>
<dbReference type="VEuPathDB" id="HostDB:ENSMUSG00000022020"/>
<dbReference type="eggNOG" id="KOG1156">
    <property type="taxonomic scope" value="Eukaryota"/>
</dbReference>
<dbReference type="GeneTree" id="ENSGT00950000183174"/>
<dbReference type="HOGENOM" id="CLU_006686_0_0_1"/>
<dbReference type="InParanoid" id="Q9DBB4"/>
<dbReference type="OMA" id="HTAINYD"/>
<dbReference type="OrthoDB" id="10263032at2759"/>
<dbReference type="PhylomeDB" id="Q9DBB4"/>
<dbReference type="TreeFam" id="TF106301"/>
<dbReference type="BioGRID-ORCS" id="66897">
    <property type="hits" value="0 hits in 77 CRISPR screens"/>
</dbReference>
<dbReference type="ChiTaRS" id="Naa16">
    <property type="organism name" value="mouse"/>
</dbReference>
<dbReference type="PRO" id="PR:Q9DBB4"/>
<dbReference type="Proteomes" id="UP000000589">
    <property type="component" value="Chromosome 14"/>
</dbReference>
<dbReference type="RNAct" id="Q9DBB4">
    <property type="molecule type" value="protein"/>
</dbReference>
<dbReference type="Bgee" id="ENSMUSG00000022020">
    <property type="expression patterns" value="Expressed in animal zygote and 222 other cell types or tissues"/>
</dbReference>
<dbReference type="ExpressionAtlas" id="Q9DBB4">
    <property type="expression patterns" value="baseline and differential"/>
</dbReference>
<dbReference type="GO" id="GO:0005829">
    <property type="term" value="C:cytosol"/>
    <property type="evidence" value="ECO:0007669"/>
    <property type="project" value="Ensembl"/>
</dbReference>
<dbReference type="GO" id="GO:0031415">
    <property type="term" value="C:NatA complex"/>
    <property type="evidence" value="ECO:0007669"/>
    <property type="project" value="Ensembl"/>
</dbReference>
<dbReference type="GO" id="GO:0043022">
    <property type="term" value="F:ribosome binding"/>
    <property type="evidence" value="ECO:0007669"/>
    <property type="project" value="Ensembl"/>
</dbReference>
<dbReference type="GO" id="GO:0043066">
    <property type="term" value="P:negative regulation of apoptotic process"/>
    <property type="evidence" value="ECO:0007669"/>
    <property type="project" value="Ensembl"/>
</dbReference>
<dbReference type="GO" id="GO:0050821">
    <property type="term" value="P:protein stabilization"/>
    <property type="evidence" value="ECO:0007669"/>
    <property type="project" value="Ensembl"/>
</dbReference>
<dbReference type="FunFam" id="1.25.40.1010:FF:000001">
    <property type="entry name" value="N-alpha-acetyltransferase 15, NatA auxiliary subunit"/>
    <property type="match status" value="1"/>
</dbReference>
<dbReference type="FunFam" id="1.25.40.1040:FF:000001">
    <property type="entry name" value="N-alpha-acetyltransferase 15, NatA auxiliary subunit"/>
    <property type="match status" value="1"/>
</dbReference>
<dbReference type="Gene3D" id="1.25.40.1010">
    <property type="match status" value="1"/>
</dbReference>
<dbReference type="Gene3D" id="1.25.40.1040">
    <property type="match status" value="1"/>
</dbReference>
<dbReference type="InterPro" id="IPR021183">
    <property type="entry name" value="NatA_aux_su"/>
</dbReference>
<dbReference type="InterPro" id="IPR011990">
    <property type="entry name" value="TPR-like_helical_dom_sf"/>
</dbReference>
<dbReference type="InterPro" id="IPR013105">
    <property type="entry name" value="TPR_2"/>
</dbReference>
<dbReference type="InterPro" id="IPR019734">
    <property type="entry name" value="TPR_rpt"/>
</dbReference>
<dbReference type="PANTHER" id="PTHR22767:SF5">
    <property type="entry name" value="N-ALPHA-ACETYLTRANSFERASE 16, NATA AUXILIARY SUBUNIT"/>
    <property type="match status" value="1"/>
</dbReference>
<dbReference type="PANTHER" id="PTHR22767">
    <property type="entry name" value="N-TERMINAL ACETYLTRANSFERASE-RELATED"/>
    <property type="match status" value="1"/>
</dbReference>
<dbReference type="Pfam" id="PF12569">
    <property type="entry name" value="NatA_aux_su"/>
    <property type="match status" value="1"/>
</dbReference>
<dbReference type="Pfam" id="PF07719">
    <property type="entry name" value="TPR_2"/>
    <property type="match status" value="1"/>
</dbReference>
<dbReference type="PIRSF" id="PIRSF000422">
    <property type="entry name" value="N-terminal-AcTrfase-A_aux_su"/>
    <property type="match status" value="1"/>
</dbReference>
<dbReference type="SMART" id="SM00028">
    <property type="entry name" value="TPR"/>
    <property type="match status" value="5"/>
</dbReference>
<dbReference type="SUPFAM" id="SSF48452">
    <property type="entry name" value="TPR-like"/>
    <property type="match status" value="1"/>
</dbReference>
<dbReference type="PROSITE" id="PS50005">
    <property type="entry name" value="TPR"/>
    <property type="match status" value="5"/>
</dbReference>
<dbReference type="PROSITE" id="PS50293">
    <property type="entry name" value="TPR_REGION"/>
    <property type="match status" value="2"/>
</dbReference>
<proteinExistence type="evidence at transcript level"/>
<keyword id="KW-1185">Reference proteome</keyword>
<keyword id="KW-0677">Repeat</keyword>
<keyword id="KW-0802">TPR repeat</keyword>
<evidence type="ECO:0000250" key="1"/>
<evidence type="ECO:0000256" key="2">
    <source>
        <dbReference type="SAM" id="MobiDB-lite"/>
    </source>
</evidence>
<evidence type="ECO:0000269" key="3">
    <source>
    </source>
</evidence>
<protein>
    <recommendedName>
        <fullName>N-alpha-acetyltransferase 16, NatA auxiliary subunit</fullName>
    </recommendedName>
    <alternativeName>
        <fullName>NMDA receptor-regulated 1-like protein</fullName>
        <shortName>NARG1-like protein</shortName>
    </alternativeName>
</protein>
<accession>Q9DBB4</accession>
<accession>Q3U7V2</accession>
<reference key="1">
    <citation type="journal article" date="2005" name="Science">
        <title>The transcriptional landscape of the mammalian genome.</title>
        <authorList>
            <person name="Carninci P."/>
            <person name="Kasukawa T."/>
            <person name="Katayama S."/>
            <person name="Gough J."/>
            <person name="Frith M.C."/>
            <person name="Maeda N."/>
            <person name="Oyama R."/>
            <person name="Ravasi T."/>
            <person name="Lenhard B."/>
            <person name="Wells C."/>
            <person name="Kodzius R."/>
            <person name="Shimokawa K."/>
            <person name="Bajic V.B."/>
            <person name="Brenner S.E."/>
            <person name="Batalov S."/>
            <person name="Forrest A.R."/>
            <person name="Zavolan M."/>
            <person name="Davis M.J."/>
            <person name="Wilming L.G."/>
            <person name="Aidinis V."/>
            <person name="Allen J.E."/>
            <person name="Ambesi-Impiombato A."/>
            <person name="Apweiler R."/>
            <person name="Aturaliya R.N."/>
            <person name="Bailey T.L."/>
            <person name="Bansal M."/>
            <person name="Baxter L."/>
            <person name="Beisel K.W."/>
            <person name="Bersano T."/>
            <person name="Bono H."/>
            <person name="Chalk A.M."/>
            <person name="Chiu K.P."/>
            <person name="Choudhary V."/>
            <person name="Christoffels A."/>
            <person name="Clutterbuck D.R."/>
            <person name="Crowe M.L."/>
            <person name="Dalla E."/>
            <person name="Dalrymple B.P."/>
            <person name="de Bono B."/>
            <person name="Della Gatta G."/>
            <person name="di Bernardo D."/>
            <person name="Down T."/>
            <person name="Engstrom P."/>
            <person name="Fagiolini M."/>
            <person name="Faulkner G."/>
            <person name="Fletcher C.F."/>
            <person name="Fukushima T."/>
            <person name="Furuno M."/>
            <person name="Futaki S."/>
            <person name="Gariboldi M."/>
            <person name="Georgii-Hemming P."/>
            <person name="Gingeras T.R."/>
            <person name="Gojobori T."/>
            <person name="Green R.E."/>
            <person name="Gustincich S."/>
            <person name="Harbers M."/>
            <person name="Hayashi Y."/>
            <person name="Hensch T.K."/>
            <person name="Hirokawa N."/>
            <person name="Hill D."/>
            <person name="Huminiecki L."/>
            <person name="Iacono M."/>
            <person name="Ikeo K."/>
            <person name="Iwama A."/>
            <person name="Ishikawa T."/>
            <person name="Jakt M."/>
            <person name="Kanapin A."/>
            <person name="Katoh M."/>
            <person name="Kawasawa Y."/>
            <person name="Kelso J."/>
            <person name="Kitamura H."/>
            <person name="Kitano H."/>
            <person name="Kollias G."/>
            <person name="Krishnan S.P."/>
            <person name="Kruger A."/>
            <person name="Kummerfeld S.K."/>
            <person name="Kurochkin I.V."/>
            <person name="Lareau L.F."/>
            <person name="Lazarevic D."/>
            <person name="Lipovich L."/>
            <person name="Liu J."/>
            <person name="Liuni S."/>
            <person name="McWilliam S."/>
            <person name="Madan Babu M."/>
            <person name="Madera M."/>
            <person name="Marchionni L."/>
            <person name="Matsuda H."/>
            <person name="Matsuzawa S."/>
            <person name="Miki H."/>
            <person name="Mignone F."/>
            <person name="Miyake S."/>
            <person name="Morris K."/>
            <person name="Mottagui-Tabar S."/>
            <person name="Mulder N."/>
            <person name="Nakano N."/>
            <person name="Nakauchi H."/>
            <person name="Ng P."/>
            <person name="Nilsson R."/>
            <person name="Nishiguchi S."/>
            <person name="Nishikawa S."/>
            <person name="Nori F."/>
            <person name="Ohara O."/>
            <person name="Okazaki Y."/>
            <person name="Orlando V."/>
            <person name="Pang K.C."/>
            <person name="Pavan W.J."/>
            <person name="Pavesi G."/>
            <person name="Pesole G."/>
            <person name="Petrovsky N."/>
            <person name="Piazza S."/>
            <person name="Reed J."/>
            <person name="Reid J.F."/>
            <person name="Ring B.Z."/>
            <person name="Ringwald M."/>
            <person name="Rost B."/>
            <person name="Ruan Y."/>
            <person name="Salzberg S.L."/>
            <person name="Sandelin A."/>
            <person name="Schneider C."/>
            <person name="Schoenbach C."/>
            <person name="Sekiguchi K."/>
            <person name="Semple C.A."/>
            <person name="Seno S."/>
            <person name="Sessa L."/>
            <person name="Sheng Y."/>
            <person name="Shibata Y."/>
            <person name="Shimada H."/>
            <person name="Shimada K."/>
            <person name="Silva D."/>
            <person name="Sinclair B."/>
            <person name="Sperling S."/>
            <person name="Stupka E."/>
            <person name="Sugiura K."/>
            <person name="Sultana R."/>
            <person name="Takenaka Y."/>
            <person name="Taki K."/>
            <person name="Tammoja K."/>
            <person name="Tan S.L."/>
            <person name="Tang S."/>
            <person name="Taylor M.S."/>
            <person name="Tegner J."/>
            <person name="Teichmann S.A."/>
            <person name="Ueda H.R."/>
            <person name="van Nimwegen E."/>
            <person name="Verardo R."/>
            <person name="Wei C.L."/>
            <person name="Yagi K."/>
            <person name="Yamanishi H."/>
            <person name="Zabarovsky E."/>
            <person name="Zhu S."/>
            <person name="Zimmer A."/>
            <person name="Hide W."/>
            <person name="Bult C."/>
            <person name="Grimmond S.M."/>
            <person name="Teasdale R.D."/>
            <person name="Liu E.T."/>
            <person name="Brusic V."/>
            <person name="Quackenbush J."/>
            <person name="Wahlestedt C."/>
            <person name="Mattick J.S."/>
            <person name="Hume D.A."/>
            <person name="Kai C."/>
            <person name="Sasaki D."/>
            <person name="Tomaru Y."/>
            <person name="Fukuda S."/>
            <person name="Kanamori-Katayama M."/>
            <person name="Suzuki M."/>
            <person name="Aoki J."/>
            <person name="Arakawa T."/>
            <person name="Iida J."/>
            <person name="Imamura K."/>
            <person name="Itoh M."/>
            <person name="Kato T."/>
            <person name="Kawaji H."/>
            <person name="Kawagashira N."/>
            <person name="Kawashima T."/>
            <person name="Kojima M."/>
            <person name="Kondo S."/>
            <person name="Konno H."/>
            <person name="Nakano K."/>
            <person name="Ninomiya N."/>
            <person name="Nishio T."/>
            <person name="Okada M."/>
            <person name="Plessy C."/>
            <person name="Shibata K."/>
            <person name="Shiraki T."/>
            <person name="Suzuki S."/>
            <person name="Tagami M."/>
            <person name="Waki K."/>
            <person name="Watahiki A."/>
            <person name="Okamura-Oho Y."/>
            <person name="Suzuki H."/>
            <person name="Kawai J."/>
            <person name="Hayashizaki Y."/>
        </authorList>
    </citation>
    <scope>NUCLEOTIDE SEQUENCE [LARGE SCALE MRNA]</scope>
    <source>
        <strain>C57BL/6J</strain>
        <tissue>Bone marrow</tissue>
        <tissue>Liver</tissue>
    </source>
</reference>
<reference key="2">
    <citation type="journal article" date="2004" name="Genome Res.">
        <title>The status, quality, and expansion of the NIH full-length cDNA project: the Mammalian Gene Collection (MGC).</title>
        <authorList>
            <consortium name="The MGC Project Team"/>
        </authorList>
    </citation>
    <scope>NUCLEOTIDE SEQUENCE [LARGE SCALE MRNA]</scope>
    <source>
        <strain>C57BL/6J</strain>
        <tissue>Brain</tissue>
    </source>
</reference>
<reference key="3">
    <citation type="journal article" date="2003" name="J. Biol. Chem.">
        <title>An evolutionarily conserved N-terminal acetyltransferase complex associated with neuronal development.</title>
        <authorList>
            <person name="Sugiura N."/>
            <person name="Adams S.M."/>
            <person name="Corriveau R.A."/>
        </authorList>
    </citation>
    <scope>TISSUE SPECIFICITY</scope>
</reference>
<name>NAA16_MOUSE</name>
<organism>
    <name type="scientific">Mus musculus</name>
    <name type="common">Mouse</name>
    <dbReference type="NCBI Taxonomy" id="10090"/>
    <lineage>
        <taxon>Eukaryota</taxon>
        <taxon>Metazoa</taxon>
        <taxon>Chordata</taxon>
        <taxon>Craniata</taxon>
        <taxon>Vertebrata</taxon>
        <taxon>Euteleostomi</taxon>
        <taxon>Mammalia</taxon>
        <taxon>Eutheria</taxon>
        <taxon>Euarchontoglires</taxon>
        <taxon>Glires</taxon>
        <taxon>Rodentia</taxon>
        <taxon>Myomorpha</taxon>
        <taxon>Muroidea</taxon>
        <taxon>Muridae</taxon>
        <taxon>Murinae</taxon>
        <taxon>Mus</taxon>
        <taxon>Mus</taxon>
    </lineage>
</organism>
<comment type="function">
    <text evidence="1">Auxillary subunit of the N-terminal acetyltransferase A (NatA) complex which displays alpha (N-terminal) acetyltransferase activity.</text>
</comment>
<comment type="subunit">
    <text evidence="1">Component of the N-terminal acetyltransferase A (NatA) complex composed of NAA10 and NAA16.</text>
</comment>
<comment type="tissue specificity">
    <text evidence="3">Highest levels in the kidney and testes. Moderate expression in the liver, thymus and skin.</text>
</comment>
<gene>
    <name type="primary">Naa16</name>
    <name type="synonym">Narg1l</name>
    <name type="synonym">Nat2</name>
</gene>